<organism evidence="8">
    <name type="scientific">Arabidopsis thaliana</name>
    <name type="common">Mouse-ear cress</name>
    <dbReference type="NCBI Taxonomy" id="3702"/>
    <lineage>
        <taxon>Eukaryota</taxon>
        <taxon>Viridiplantae</taxon>
        <taxon>Streptophyta</taxon>
        <taxon>Embryophyta</taxon>
        <taxon>Tracheophyta</taxon>
        <taxon>Spermatophyta</taxon>
        <taxon>Magnoliopsida</taxon>
        <taxon>eudicotyledons</taxon>
        <taxon>Gunneridae</taxon>
        <taxon>Pentapetalae</taxon>
        <taxon>rosids</taxon>
        <taxon>malvids</taxon>
        <taxon>Brassicales</taxon>
        <taxon>Brassicaceae</taxon>
        <taxon>Camelineae</taxon>
        <taxon>Arabidopsis</taxon>
    </lineage>
</organism>
<feature type="transit peptide" description="Chloroplast" evidence="1">
    <location>
        <begin position="1"/>
        <end position="68"/>
    </location>
</feature>
<feature type="chain" id="PRO_0000433330" description="RHOMBOID-like protein 9, chloroplastic">
    <location>
        <begin position="69"/>
        <end position="434"/>
    </location>
</feature>
<feature type="transmembrane region" description="Helical" evidence="1">
    <location>
        <begin position="182"/>
        <end position="202"/>
    </location>
</feature>
<feature type="transmembrane region" description="Helical" evidence="1">
    <location>
        <begin position="209"/>
        <end position="229"/>
    </location>
</feature>
<feature type="transmembrane region" description="Helical" evidence="1">
    <location>
        <begin position="238"/>
        <end position="258"/>
    </location>
</feature>
<feature type="transmembrane region" description="Helical" evidence="1">
    <location>
        <begin position="267"/>
        <end position="287"/>
    </location>
</feature>
<feature type="transmembrane region" description="Helical" evidence="1">
    <location>
        <begin position="289"/>
        <end position="309"/>
    </location>
</feature>
<feature type="transmembrane region" description="Helical" evidence="1">
    <location>
        <begin position="326"/>
        <end position="346"/>
    </location>
</feature>
<feature type="transmembrane region" description="Helical" evidence="1">
    <location>
        <begin position="352"/>
        <end position="372"/>
    </location>
</feature>
<feature type="transmembrane region" description="Helical" evidence="1">
    <location>
        <begin position="399"/>
        <end position="419"/>
    </location>
</feature>
<keyword id="KW-0150">Chloroplast</keyword>
<keyword id="KW-0378">Hydrolase</keyword>
<keyword id="KW-0472">Membrane</keyword>
<keyword id="KW-0934">Plastid</keyword>
<keyword id="KW-0645">Protease</keyword>
<keyword id="KW-1185">Reference proteome</keyword>
<keyword id="KW-0809">Transit peptide</keyword>
<keyword id="KW-0812">Transmembrane</keyword>
<keyword id="KW-1133">Transmembrane helix</keyword>
<accession>Q9FFX0</accession>
<dbReference type="EC" id="3.4.21.-" evidence="5"/>
<dbReference type="EMBL" id="AB005231">
    <property type="protein sequence ID" value="BAB10141.1"/>
    <property type="molecule type" value="Genomic_DNA"/>
</dbReference>
<dbReference type="EMBL" id="CP002688">
    <property type="protein sequence ID" value="AED94327.1"/>
    <property type="molecule type" value="Genomic_DNA"/>
</dbReference>
<dbReference type="EMBL" id="CP002688">
    <property type="protein sequence ID" value="AED94328.1"/>
    <property type="molecule type" value="Genomic_DNA"/>
</dbReference>
<dbReference type="EMBL" id="CP002688">
    <property type="protein sequence ID" value="ANM68896.1"/>
    <property type="molecule type" value="Genomic_DNA"/>
</dbReference>
<dbReference type="EMBL" id="BT012562">
    <property type="protein sequence ID" value="AAS99706.1"/>
    <property type="molecule type" value="mRNA"/>
</dbReference>
<dbReference type="EMBL" id="AK226685">
    <property type="protein sequence ID" value="BAE98792.1"/>
    <property type="molecule type" value="mRNA"/>
</dbReference>
<dbReference type="RefSeq" id="NP_001078681.1">
    <property type="nucleotide sequence ID" value="NM_001085212.2"/>
</dbReference>
<dbReference type="RefSeq" id="NP_001330612.1">
    <property type="nucleotide sequence ID" value="NM_001344253.1"/>
</dbReference>
<dbReference type="RefSeq" id="NP_198667.1">
    <property type="nucleotide sequence ID" value="NM_123212.3"/>
</dbReference>
<dbReference type="SMR" id="Q9FFX0"/>
<dbReference type="FunCoup" id="Q9FFX0">
    <property type="interactions" value="1307"/>
</dbReference>
<dbReference type="STRING" id="3702.Q9FFX0"/>
<dbReference type="iPTMnet" id="Q9FFX0"/>
<dbReference type="PaxDb" id="3702-AT5G38510.1"/>
<dbReference type="ProteomicsDB" id="225971"/>
<dbReference type="EnsemblPlants" id="AT5G38510.1">
    <property type="protein sequence ID" value="AT5G38510.1"/>
    <property type="gene ID" value="AT5G38510"/>
</dbReference>
<dbReference type="EnsemblPlants" id="AT5G38510.2">
    <property type="protein sequence ID" value="AT5G38510.2"/>
    <property type="gene ID" value="AT5G38510"/>
</dbReference>
<dbReference type="EnsemblPlants" id="AT5G38510.3">
    <property type="protein sequence ID" value="AT5G38510.3"/>
    <property type="gene ID" value="AT5G38510"/>
</dbReference>
<dbReference type="GeneID" id="833839"/>
<dbReference type="Gramene" id="AT5G38510.1">
    <property type="protein sequence ID" value="AT5G38510.1"/>
    <property type="gene ID" value="AT5G38510"/>
</dbReference>
<dbReference type="Gramene" id="AT5G38510.2">
    <property type="protein sequence ID" value="AT5G38510.2"/>
    <property type="gene ID" value="AT5G38510"/>
</dbReference>
<dbReference type="Gramene" id="AT5G38510.3">
    <property type="protein sequence ID" value="AT5G38510.3"/>
    <property type="gene ID" value="AT5G38510"/>
</dbReference>
<dbReference type="KEGG" id="ath:AT5G38510"/>
<dbReference type="Araport" id="AT5G38510"/>
<dbReference type="TAIR" id="AT5G38510"/>
<dbReference type="eggNOG" id="KOG2289">
    <property type="taxonomic scope" value="Eukaryota"/>
</dbReference>
<dbReference type="HOGENOM" id="CLU_043890_0_0_1"/>
<dbReference type="InParanoid" id="Q9FFX0"/>
<dbReference type="OMA" id="DDWAHFG"/>
<dbReference type="OrthoDB" id="418595at2759"/>
<dbReference type="PhylomeDB" id="Q9FFX0"/>
<dbReference type="PRO" id="PR:Q9FFX0"/>
<dbReference type="Proteomes" id="UP000006548">
    <property type="component" value="Chromosome 5"/>
</dbReference>
<dbReference type="ExpressionAtlas" id="Q9FFX0">
    <property type="expression patterns" value="baseline and differential"/>
</dbReference>
<dbReference type="GO" id="GO:0031969">
    <property type="term" value="C:chloroplast membrane"/>
    <property type="evidence" value="ECO:0007669"/>
    <property type="project" value="UniProtKB-SubCell"/>
</dbReference>
<dbReference type="GO" id="GO:0004252">
    <property type="term" value="F:serine-type endopeptidase activity"/>
    <property type="evidence" value="ECO:0007669"/>
    <property type="project" value="InterPro"/>
</dbReference>
<dbReference type="GO" id="GO:0006508">
    <property type="term" value="P:proteolysis"/>
    <property type="evidence" value="ECO:0007669"/>
    <property type="project" value="UniProtKB-KW"/>
</dbReference>
<dbReference type="FunFam" id="1.20.1540.10:FF:000017">
    <property type="entry name" value="RHOMBOID-like protein 9, chloroplastic"/>
    <property type="match status" value="1"/>
</dbReference>
<dbReference type="Gene3D" id="1.20.1540.10">
    <property type="entry name" value="Rhomboid-like"/>
    <property type="match status" value="1"/>
</dbReference>
<dbReference type="InterPro" id="IPR022764">
    <property type="entry name" value="Peptidase_S54_rhomboid_dom"/>
</dbReference>
<dbReference type="InterPro" id="IPR035952">
    <property type="entry name" value="Rhomboid-like_sf"/>
</dbReference>
<dbReference type="InterPro" id="IPR050925">
    <property type="entry name" value="Rhomboid_protease_S54"/>
</dbReference>
<dbReference type="PANTHER" id="PTHR43731">
    <property type="entry name" value="RHOMBOID PROTEASE"/>
    <property type="match status" value="1"/>
</dbReference>
<dbReference type="PANTHER" id="PTHR43731:SF30">
    <property type="entry name" value="RHOMBOID-LIKE PROTEIN 9, CHLOROPLASTIC"/>
    <property type="match status" value="1"/>
</dbReference>
<dbReference type="Pfam" id="PF01694">
    <property type="entry name" value="Rhomboid"/>
    <property type="match status" value="1"/>
</dbReference>
<dbReference type="SUPFAM" id="SSF144091">
    <property type="entry name" value="Rhomboid-like"/>
    <property type="match status" value="1"/>
</dbReference>
<proteinExistence type="evidence at transcript level"/>
<gene>
    <name evidence="2" type="primary">RBL9</name>
    <name evidence="6" type="ordered locus">At5g38510</name>
    <name evidence="7" type="ORF">MBB18.4</name>
</gene>
<comment type="function">
    <text evidence="4">Probable rhomboid-type serine protease that catalyzes intramembrane proteolysis.</text>
</comment>
<comment type="subcellular location">
    <subcellularLocation>
        <location evidence="1">Plastid</location>
        <location evidence="1">Chloroplast membrane</location>
        <topology evidence="1">Multi-pass membrane protein</topology>
    </subcellularLocation>
</comment>
<comment type="similarity">
    <text evidence="5">Belongs to the peptidase S54 family.</text>
</comment>
<comment type="caution">
    <text evidence="3">Might be an inactive rhomboid-type serine protease due to mismatches with the consensus active sites.</text>
</comment>
<name>RBL9_ARATH</name>
<protein>
    <recommendedName>
        <fullName evidence="2">RHOMBOID-like protein 9, chloroplastic</fullName>
        <shortName evidence="2">AtRBL9</shortName>
        <ecNumber evidence="5">3.4.21.-</ecNumber>
    </recommendedName>
</protein>
<sequence length="434" mass="47727">MALFPLHHEVPCKGEVLFDSNGLRRFSSGLKHRTMAEATTLGRDCRMKSYMKSIPYCRSPRRRLCLVRASSENKITKQRLKLLDSYFGKLQNDDEKPSISTGDDIDRKAELNVNEELDSLSAYLDKLQKDAKSKGLVSSTLDVVKSEGGSVASKLRKTGIENNNSPFQQFDDEDQAEDTLNFYAVSILASINVGVCLFEAAAPVRNNNMGLLSLPLLYGAKINDLILAGEWWRLVTPMFLHSGIPHVALSSWALLTFGPKVCRDYGLFTFCLIYILGGVSGNFMSFLHTADPTVGGTGPAFALIGAWLVDQNQNKEMIKSNEYEDLFQKAIIMTGFGLILSHFGPIDDWTNLGALIAGIVYGFFTCPVLQLGSGGSERQEGIVTVGPEKQNSADPCKSFLLFTIFVAVIVTSLLLIGDGPLDFPTYDDVVYSLI</sequence>
<reference key="1">
    <citation type="journal article" date="1997" name="DNA Res.">
        <title>Structural analysis of Arabidopsis thaliana chromosome 5. I. Sequence features of the 1.6 Mb regions covered by twenty physically assigned P1 clones.</title>
        <authorList>
            <person name="Sato S."/>
            <person name="Kotani H."/>
            <person name="Nakamura Y."/>
            <person name="Kaneko T."/>
            <person name="Asamizu E."/>
            <person name="Fukami M."/>
            <person name="Miyajima N."/>
            <person name="Tabata S."/>
        </authorList>
    </citation>
    <scope>NUCLEOTIDE SEQUENCE [LARGE SCALE GENOMIC DNA]</scope>
    <source>
        <strain>cv. Columbia</strain>
    </source>
</reference>
<reference key="2">
    <citation type="journal article" date="2017" name="Plant J.">
        <title>Araport11: a complete reannotation of the Arabidopsis thaliana reference genome.</title>
        <authorList>
            <person name="Cheng C.Y."/>
            <person name="Krishnakumar V."/>
            <person name="Chan A.P."/>
            <person name="Thibaud-Nissen F."/>
            <person name="Schobel S."/>
            <person name="Town C.D."/>
        </authorList>
    </citation>
    <scope>GENOME REANNOTATION</scope>
    <source>
        <strain>cv. Columbia</strain>
    </source>
</reference>
<reference key="3">
    <citation type="submission" date="2004-04" db="EMBL/GenBank/DDBJ databases">
        <title>Arabidopsis ORF clones.</title>
        <authorList>
            <person name="Kim C.J."/>
            <person name="Chen H."/>
            <person name="Cheuk R."/>
            <person name="Shinn P."/>
            <person name="Carninci P."/>
            <person name="Hayashizaki Y."/>
            <person name="Ishida J."/>
            <person name="Kamiya A."/>
            <person name="Kawai J."/>
            <person name="Narusaka M."/>
            <person name="Sakurai T."/>
            <person name="Satou M."/>
            <person name="Seki M."/>
            <person name="Shinozaki K."/>
            <person name="Ecker J.R."/>
        </authorList>
    </citation>
    <scope>NUCLEOTIDE SEQUENCE [LARGE SCALE MRNA]</scope>
</reference>
<reference key="4">
    <citation type="submission" date="2006-07" db="EMBL/GenBank/DDBJ databases">
        <title>Large-scale analysis of RIKEN Arabidopsis full-length (RAFL) cDNAs.</title>
        <authorList>
            <person name="Totoki Y."/>
            <person name="Seki M."/>
            <person name="Ishida J."/>
            <person name="Nakajima M."/>
            <person name="Enju A."/>
            <person name="Kamiya A."/>
            <person name="Narusaka M."/>
            <person name="Shin-i T."/>
            <person name="Nakagawa M."/>
            <person name="Sakamoto N."/>
            <person name="Oishi K."/>
            <person name="Kohara Y."/>
            <person name="Kobayashi M."/>
            <person name="Toyoda A."/>
            <person name="Sakaki Y."/>
            <person name="Sakurai T."/>
            <person name="Iida K."/>
            <person name="Akiyama K."/>
            <person name="Satou M."/>
            <person name="Toyoda T."/>
            <person name="Konagaya A."/>
            <person name="Carninci P."/>
            <person name="Kawai J."/>
            <person name="Hayashizaki Y."/>
            <person name="Shinozaki K."/>
        </authorList>
    </citation>
    <scope>NUCLEOTIDE SEQUENCE [LARGE SCALE MRNA]</scope>
    <source>
        <strain>cv. Columbia</strain>
    </source>
</reference>
<reference key="5">
    <citation type="journal article" date="2006" name="BMC Genomics">
        <title>Cross genome comparisons of serine proteases in Arabidopsis and rice.</title>
        <authorList>
            <person name="Tripathi L.P."/>
            <person name="Sowdhamini R."/>
        </authorList>
    </citation>
    <scope>GENE FAMILY</scope>
    <scope>NOMENCLATURE</scope>
</reference>
<reference key="6">
    <citation type="journal article" date="2006" name="BMC Plant Biol.">
        <title>Protease gene families in Populus and Arabidopsis.</title>
        <authorList>
            <person name="Garcia-Lorenzo M."/>
            <person name="Sjodin A."/>
            <person name="Jansson S."/>
            <person name="Funk C."/>
        </authorList>
    </citation>
    <scope>GENE FAMILY</scope>
    <scope>NOMENCLATURE</scope>
</reference>
<reference key="7">
    <citation type="journal article" date="2007" name="Genome Res.">
        <title>Functional and evolutionary implications of enhanced genomic analysis of rhomboid intramembrane proteases.</title>
        <authorList>
            <person name="Lemberg M.K."/>
            <person name="Freeman M."/>
        </authorList>
    </citation>
    <scope>GENE FAMILY</scope>
</reference>
<reference key="8">
    <citation type="journal article" date="2012" name="Physiol. Plantarum">
        <title>Rhomboid proteases in plants - still in square one?</title>
        <authorList>
            <person name="Knopf R.R."/>
            <person name="Adam Z."/>
        </authorList>
    </citation>
    <scope>REVIEW</scope>
</reference>
<evidence type="ECO:0000255" key="1"/>
<evidence type="ECO:0000303" key="2">
    <source>
    </source>
</evidence>
<evidence type="ECO:0000303" key="3">
    <source>
    </source>
</evidence>
<evidence type="ECO:0000303" key="4">
    <source>
    </source>
</evidence>
<evidence type="ECO:0000305" key="5"/>
<evidence type="ECO:0000312" key="6">
    <source>
        <dbReference type="Araport" id="AT5G38510"/>
    </source>
</evidence>
<evidence type="ECO:0000312" key="7">
    <source>
        <dbReference type="EMBL" id="BAB10141.1"/>
    </source>
</evidence>
<evidence type="ECO:0000312" key="8">
    <source>
        <dbReference type="Proteomes" id="UP000006548"/>
    </source>
</evidence>